<reference key="1">
    <citation type="journal article" date="2005" name="Plant Physiol.">
        <title>Surrogate splicing for functional analysis of sesquiterpene synthase genes.</title>
        <authorList>
            <person name="Wu S."/>
            <person name="Schoenbeck M.A."/>
            <person name="Greenhagen B.T."/>
            <person name="Takahashi S."/>
            <person name="Lee S."/>
            <person name="Coates R.M."/>
            <person name="Chappell J."/>
        </authorList>
    </citation>
    <scope>NUCLEOTIDE SEQUENCE [MRNA]</scope>
    <scope>FUNCTION</scope>
</reference>
<reference key="2">
    <citation type="submission" date="1999-02" db="EMBL/GenBank/DDBJ databases">
        <title>Structural analysis of Arabidopsis thaliana chromosome 5. XI.</title>
        <authorList>
            <person name="Kaneko T."/>
            <person name="Katoh T."/>
            <person name="Asamizu E."/>
            <person name="Sato S."/>
            <person name="Nakamura Y."/>
            <person name="Kotani H."/>
            <person name="Tabata S."/>
        </authorList>
    </citation>
    <scope>NUCLEOTIDE SEQUENCE [LARGE SCALE GENOMIC DNA]</scope>
    <source>
        <strain>cv. Columbia</strain>
    </source>
</reference>
<reference key="3">
    <citation type="journal article" date="2017" name="Plant J.">
        <title>Araport11: a complete reannotation of the Arabidopsis thaliana reference genome.</title>
        <authorList>
            <person name="Cheng C.Y."/>
            <person name="Krishnakumar V."/>
            <person name="Chan A.P."/>
            <person name="Thibaud-Nissen F."/>
            <person name="Schobel S."/>
            <person name="Town C.D."/>
        </authorList>
    </citation>
    <scope>GENOME REANNOTATION</scope>
    <source>
        <strain>cv. Columbia</strain>
    </source>
</reference>
<reference key="4">
    <citation type="submission" date="2007-02" db="EMBL/GenBank/DDBJ databases">
        <title>Arabidopsis ORF clones.</title>
        <authorList>
            <person name="Bautista V.R."/>
            <person name="Kim C.J."/>
            <person name="Chen H."/>
            <person name="Wu S.Y."/>
            <person name="De Los Reyes C."/>
            <person name="Ecker J.R."/>
        </authorList>
    </citation>
    <scope>NUCLEOTIDE SEQUENCE [LARGE SCALE MRNA]</scope>
    <source>
        <strain>cv. Columbia</strain>
    </source>
</reference>
<reference key="5">
    <citation type="journal article" date="2002" name="Mol. Genet. Genomics">
        <title>Genomic analysis of the terpenoid synthase (AtTPS) gene family of Arabidopsis thaliana.</title>
        <authorList>
            <person name="Aubourg S."/>
            <person name="Lecharny A."/>
            <person name="Bohlmann J."/>
        </authorList>
    </citation>
    <scope>GENE FAMILY</scope>
    <scope>NOMENCLATURE</scope>
</reference>
<reference key="6">
    <citation type="journal article" date="2003" name="Plant Cell">
        <title>Biosynthesis and emission of terpenoid volatiles from Arabidopsis flowers.</title>
        <authorList>
            <person name="Chen F."/>
            <person name="Tholl D."/>
            <person name="D'Auria J.C."/>
            <person name="Farooq A."/>
            <person name="Pichersky E."/>
            <person name="Gershenzon J."/>
        </authorList>
    </citation>
    <scope>TISSUE SPECIFICITY</scope>
</reference>
<reference key="7">
    <citation type="journal article" date="2003" name="Plant Mol. Biol.">
        <title>Genome organization in Arabidopsis thaliana: a survey for genes involved in isoprenoid and chlorophyll metabolism.</title>
        <authorList>
            <person name="Lange B.M."/>
            <person name="Ghassemian M."/>
        </authorList>
    </citation>
    <scope>GENE FAMILY</scope>
</reference>
<reference key="8">
    <citation type="journal article" date="2005" name="Plant J.">
        <title>Two sesquiterpene synthases are responsible for the complex mixture of sesquiterpenes emitted from Arabidopsis flowers.</title>
        <authorList>
            <person name="Tholl D."/>
            <person name="Chen F."/>
            <person name="Petri J."/>
            <person name="Gershenzon J."/>
            <person name="Pichersky E."/>
        </authorList>
    </citation>
    <scope>FUNCTION</scope>
    <scope>CATALYTIC ACTIVITY</scope>
    <scope>BIOPHYSICOCHEMICAL PROPERTIES</scope>
    <scope>DISRUPTION PHENOTYPE</scope>
    <scope>TISSUE SPECIFICITY</scope>
    <scope>PATHWAY</scope>
</reference>
<dbReference type="EC" id="4.2.3.69" evidence="3"/>
<dbReference type="EC" id="4.2.3.55" evidence="3"/>
<dbReference type="EC" id="4.2.3.47" evidence="3"/>
<dbReference type="EC" id="4.2.3.95" evidence="3"/>
<dbReference type="EC" id="4.2.3.65" evidence="3"/>
<dbReference type="EC" id="4.2.3.78" evidence="3"/>
<dbReference type="EC" id="4.2.3.123" evidence="3"/>
<dbReference type="EC" id="4.2.3.79" evidence="3"/>
<dbReference type="EMBL" id="AY876386">
    <property type="protein sequence ID" value="AAX59990.1"/>
    <property type="molecule type" value="mRNA"/>
</dbReference>
<dbReference type="EMBL" id="AB024024">
    <property type="protein sequence ID" value="BAA98116.1"/>
    <property type="status" value="ALT_SEQ"/>
    <property type="molecule type" value="Genomic_DNA"/>
</dbReference>
<dbReference type="EMBL" id="CP002688">
    <property type="protein sequence ID" value="AED95140.1"/>
    <property type="molecule type" value="Genomic_DNA"/>
</dbReference>
<dbReference type="EMBL" id="BT030324">
    <property type="protein sequence ID" value="ABO09887.1"/>
    <property type="molecule type" value="mRNA"/>
</dbReference>
<dbReference type="RefSeq" id="NP_199276.1">
    <property type="nucleotide sequence ID" value="NM_123830.3"/>
</dbReference>
<dbReference type="SMR" id="Q4KSH9"/>
<dbReference type="FunCoup" id="Q4KSH9">
    <property type="interactions" value="48"/>
</dbReference>
<dbReference type="STRING" id="3702.Q4KSH9"/>
<dbReference type="iPTMnet" id="Q4KSH9"/>
<dbReference type="PaxDb" id="3702-AT5G44630.1"/>
<dbReference type="ProteomicsDB" id="240741"/>
<dbReference type="EnsemblPlants" id="AT5G44630.1">
    <property type="protein sequence ID" value="AT5G44630.1"/>
    <property type="gene ID" value="AT5G44630"/>
</dbReference>
<dbReference type="GeneID" id="834491"/>
<dbReference type="Gramene" id="AT5G44630.1">
    <property type="protein sequence ID" value="AT5G44630.1"/>
    <property type="gene ID" value="AT5G44630"/>
</dbReference>
<dbReference type="KEGG" id="ath:AT5G44630"/>
<dbReference type="Araport" id="AT5G44630"/>
<dbReference type="TAIR" id="AT5G44630"/>
<dbReference type="eggNOG" id="ENOG502QUCN">
    <property type="taxonomic scope" value="Eukaryota"/>
</dbReference>
<dbReference type="HOGENOM" id="CLU_003125_7_2_1"/>
<dbReference type="InParanoid" id="Q4KSH9"/>
<dbReference type="OMA" id="KWARAGQ"/>
<dbReference type="PhylomeDB" id="Q4KSH9"/>
<dbReference type="BioCyc" id="ARA:AT5G44630-MONOMER"/>
<dbReference type="BioCyc" id="MetaCyc:AT5G44630-MONOMER"/>
<dbReference type="BRENDA" id="4.2.3.69">
    <property type="organism ID" value="399"/>
</dbReference>
<dbReference type="BRENDA" id="4.2.3.78">
    <property type="organism ID" value="399"/>
</dbReference>
<dbReference type="BRENDA" id="4.2.3.79">
    <property type="organism ID" value="399"/>
</dbReference>
<dbReference type="SABIO-RK" id="Q4KSH9"/>
<dbReference type="UniPathway" id="UPA00213"/>
<dbReference type="PRO" id="PR:Q4KSH9"/>
<dbReference type="Proteomes" id="UP000006548">
    <property type="component" value="Chromosome 5"/>
</dbReference>
<dbReference type="ExpressionAtlas" id="Q4KSH9">
    <property type="expression patterns" value="baseline and differential"/>
</dbReference>
<dbReference type="GO" id="GO:0005737">
    <property type="term" value="C:cytoplasm"/>
    <property type="evidence" value="ECO:0007669"/>
    <property type="project" value="UniProtKB-SubCell"/>
</dbReference>
<dbReference type="GO" id="GO:0009506">
    <property type="term" value="C:plasmodesma"/>
    <property type="evidence" value="ECO:0007005"/>
    <property type="project" value="TAIR"/>
</dbReference>
<dbReference type="GO" id="GO:0102878">
    <property type="term" value="F:(+)-alpha-barbatene synthase activity"/>
    <property type="evidence" value="ECO:0007669"/>
    <property type="project" value="UniProtKB-EC"/>
</dbReference>
<dbReference type="GO" id="GO:0102883">
    <property type="term" value="F:(+)-beta-chamigrene synthase activity"/>
    <property type="evidence" value="ECO:0007669"/>
    <property type="project" value="UniProtKB-EC"/>
</dbReference>
<dbReference type="GO" id="GO:0102879">
    <property type="term" value="F:(+)-thujopsene synthase activity"/>
    <property type="evidence" value="ECO:0007669"/>
    <property type="project" value="UniProtKB-EC"/>
</dbReference>
<dbReference type="GO" id="GO:0000287">
    <property type="term" value="F:magnesium ion binding"/>
    <property type="evidence" value="ECO:0007669"/>
    <property type="project" value="InterPro"/>
</dbReference>
<dbReference type="GO" id="GO:0010333">
    <property type="term" value="F:terpene synthase activity"/>
    <property type="evidence" value="ECO:0007669"/>
    <property type="project" value="InterPro"/>
</dbReference>
<dbReference type="GO" id="GO:0016102">
    <property type="term" value="P:diterpenoid biosynthetic process"/>
    <property type="evidence" value="ECO:0007669"/>
    <property type="project" value="InterPro"/>
</dbReference>
<dbReference type="GO" id="GO:0051762">
    <property type="term" value="P:sesquiterpene biosynthetic process"/>
    <property type="evidence" value="ECO:0000314"/>
    <property type="project" value="TAIR"/>
</dbReference>
<dbReference type="GO" id="GO:0016106">
    <property type="term" value="P:sesquiterpenoid biosynthetic process"/>
    <property type="evidence" value="ECO:0000314"/>
    <property type="project" value="TAIR"/>
</dbReference>
<dbReference type="CDD" id="cd00684">
    <property type="entry name" value="Terpene_cyclase_plant_C1"/>
    <property type="match status" value="1"/>
</dbReference>
<dbReference type="FunFam" id="1.10.600.10:FF:000007">
    <property type="entry name" value="Isoprene synthase, chloroplastic"/>
    <property type="match status" value="1"/>
</dbReference>
<dbReference type="FunFam" id="1.50.10.130:FF:000001">
    <property type="entry name" value="Isoprene synthase, chloroplastic"/>
    <property type="match status" value="1"/>
</dbReference>
<dbReference type="Gene3D" id="1.10.600.10">
    <property type="entry name" value="Farnesyl Diphosphate Synthase"/>
    <property type="match status" value="1"/>
</dbReference>
<dbReference type="Gene3D" id="1.50.10.130">
    <property type="entry name" value="Terpene synthase, N-terminal domain"/>
    <property type="match status" value="1"/>
</dbReference>
<dbReference type="InterPro" id="IPR008949">
    <property type="entry name" value="Isoprenoid_synthase_dom_sf"/>
</dbReference>
<dbReference type="InterPro" id="IPR034741">
    <property type="entry name" value="Terpene_cyclase-like_1_C"/>
</dbReference>
<dbReference type="InterPro" id="IPR044814">
    <property type="entry name" value="Terpene_cyclase_plant_C1"/>
</dbReference>
<dbReference type="InterPro" id="IPR001906">
    <property type="entry name" value="Terpene_synth_N"/>
</dbReference>
<dbReference type="InterPro" id="IPR036965">
    <property type="entry name" value="Terpene_synth_N_sf"/>
</dbReference>
<dbReference type="InterPro" id="IPR050148">
    <property type="entry name" value="Terpene_synthase-like"/>
</dbReference>
<dbReference type="InterPro" id="IPR005630">
    <property type="entry name" value="Terpene_synthase_metal-bd"/>
</dbReference>
<dbReference type="InterPro" id="IPR008930">
    <property type="entry name" value="Terpenoid_cyclase/PrenylTrfase"/>
</dbReference>
<dbReference type="PANTHER" id="PTHR31225">
    <property type="entry name" value="OS04G0344100 PROTEIN-RELATED"/>
    <property type="match status" value="1"/>
</dbReference>
<dbReference type="PANTHER" id="PTHR31225:SF242">
    <property type="entry name" value="TERPENOID SYNTHASE 9"/>
    <property type="match status" value="1"/>
</dbReference>
<dbReference type="Pfam" id="PF01397">
    <property type="entry name" value="Terpene_synth"/>
    <property type="match status" value="1"/>
</dbReference>
<dbReference type="Pfam" id="PF03936">
    <property type="entry name" value="Terpene_synth_C"/>
    <property type="match status" value="1"/>
</dbReference>
<dbReference type="SFLD" id="SFLDS00005">
    <property type="entry name" value="Isoprenoid_Synthase_Type_I"/>
    <property type="match status" value="1"/>
</dbReference>
<dbReference type="SFLD" id="SFLDG01019">
    <property type="entry name" value="Terpene_Cyclase_Like_1_C_Termi"/>
    <property type="match status" value="1"/>
</dbReference>
<dbReference type="SUPFAM" id="SSF48239">
    <property type="entry name" value="Terpenoid cyclases/Protein prenyltransferases"/>
    <property type="match status" value="1"/>
</dbReference>
<dbReference type="SUPFAM" id="SSF48576">
    <property type="entry name" value="Terpenoid synthases"/>
    <property type="match status" value="1"/>
</dbReference>
<accession>Q4KSH9</accession>
<accession>A3KPF7</accession>
<accession>Q9LU03</accession>
<keyword id="KW-0963">Cytoplasm</keyword>
<keyword id="KW-0456">Lyase</keyword>
<keyword id="KW-0460">Magnesium</keyword>
<keyword id="KW-0464">Manganese</keyword>
<keyword id="KW-0479">Metal-binding</keyword>
<keyword id="KW-1185">Reference proteome</keyword>
<proteinExistence type="evidence at protein level"/>
<sequence>MEALGNFDYESYTNFTKLPSSQWGDQFLKFSIADSDFDVLEREIEVLKPKVRENIFVSSSTDKDAMKKTILSIHFLDSLGLSYHFEKEIEESLKHAFEKIEDLIADENKLHTISTIFRVFRTYGYYMSSDVFKIFKGDDGKFKESLIEDVKGMLSFYEAVHFGTTTDHILDEALSFTLNHLESLATGRRASPPHISKLIQNALHIPQHRNIQALVAREYISFYEHEEDHDETLLKLAKLNFKFLQLHYFQELKTITMWWTKLDHTSNLPPNFRERTVETWFAALMMYFEPQFSLGRIMSAKLYLVITFLDDACDTYGSISEVESLADCLERWDPDYMENLQGHMKTAFKFVMYLFKEYEEILRSQGRSFVLEKMIEEFKIIARKNLELVKWARGGHVPSFDEYIESGGAEIGTYATIACSIMGLGEIGKKEAFEWLISRPKLVRILGAKTRLMDDIADFEEDMEKGYTANALNYYMNEHGVTKEEASRELEKMNGDMNKIVNEECLKITTMPRRILMQSVNYARSLDVLYTADDVYNHREGKLKEYMRLLLVDPILL</sequence>
<comment type="function">
    <text evidence="3 4">Involved in the biosynthesis of over 15 sesquiterpenes (C15). The major products are (+)-alpha-barbatene (27.3%), (+)-thujopsene (17.8%) and (+)-beta-chamigrene (9.9%). Can use farnesyl diphosphate or geranyl diphosphate as substrates, but not geranylgeranyl diphosphate.</text>
</comment>
<comment type="catalytic activity">
    <reaction evidence="3">
        <text>(2E,6E)-farnesyl diphosphate = (+)-alpha-barbatene + diphosphate</text>
        <dbReference type="Rhea" id="RHEA:29499"/>
        <dbReference type="ChEBI" id="CHEBI:33019"/>
        <dbReference type="ChEBI" id="CHEBI:61690"/>
        <dbReference type="ChEBI" id="CHEBI:175763"/>
        <dbReference type="EC" id="4.2.3.69"/>
    </reaction>
    <physiologicalReaction direction="left-to-right" evidence="3">
        <dbReference type="Rhea" id="RHEA:29500"/>
    </physiologicalReaction>
</comment>
<comment type="catalytic activity">
    <reaction evidence="3">
        <text>(2E,6E)-farnesyl diphosphate = (+)-thujopsene + diphosphate</text>
        <dbReference type="Rhea" id="RHEA:30375"/>
        <dbReference type="ChEBI" id="CHEBI:33019"/>
        <dbReference type="ChEBI" id="CHEBI:61737"/>
        <dbReference type="ChEBI" id="CHEBI:175763"/>
        <dbReference type="EC" id="4.2.3.79"/>
    </reaction>
    <physiologicalReaction direction="left-to-right" evidence="3">
        <dbReference type="Rhea" id="RHEA:30376"/>
    </physiologicalReaction>
</comment>
<comment type="catalytic activity">
    <reaction evidence="3">
        <text>(2E,6E)-farnesyl diphosphate = (+)-beta-chamigrene + diphosphate</text>
        <dbReference type="Rhea" id="RHEA:30379"/>
        <dbReference type="ChEBI" id="CHEBI:33019"/>
        <dbReference type="ChEBI" id="CHEBI:61746"/>
        <dbReference type="ChEBI" id="CHEBI:175763"/>
        <dbReference type="EC" id="4.2.3.78"/>
    </reaction>
    <physiologicalReaction direction="left-to-right" evidence="3">
        <dbReference type="Rhea" id="RHEA:30380"/>
    </physiologicalReaction>
</comment>
<comment type="catalytic activity">
    <reaction evidence="3">
        <text>(2E,6E)-farnesyl diphosphate = (+)-beta-barbatene + diphosphate</text>
        <dbReference type="Rhea" id="RHEA:81463"/>
        <dbReference type="ChEBI" id="CHEBI:33019"/>
        <dbReference type="ChEBI" id="CHEBI:175763"/>
        <dbReference type="ChEBI" id="CHEBI:193086"/>
    </reaction>
    <physiologicalReaction direction="left-to-right" evidence="3">
        <dbReference type="Rhea" id="RHEA:81464"/>
    </physiologicalReaction>
</comment>
<comment type="catalytic activity">
    <reaction evidence="3">
        <text>(2E,6E)-farnesyl diphosphate = beta-sesquiphellandrene + diphosphate</text>
        <dbReference type="Rhea" id="RHEA:32699"/>
        <dbReference type="ChEBI" id="CHEBI:33019"/>
        <dbReference type="ChEBI" id="CHEBI:64361"/>
        <dbReference type="ChEBI" id="CHEBI:175763"/>
        <dbReference type="EC" id="4.2.3.123"/>
    </reaction>
    <physiologicalReaction direction="left-to-right" evidence="3">
        <dbReference type="Rhea" id="RHEA:32700"/>
    </physiologicalReaction>
</comment>
<comment type="catalytic activity">
    <reaction evidence="3">
        <text>(2E,6E)-farnesyl diphosphate = (S)-beta-bisabolene + diphosphate</text>
        <dbReference type="Rhea" id="RHEA:28266"/>
        <dbReference type="ChEBI" id="CHEBI:33019"/>
        <dbReference type="ChEBI" id="CHEBI:49263"/>
        <dbReference type="ChEBI" id="CHEBI:175763"/>
        <dbReference type="EC" id="4.2.3.55"/>
    </reaction>
    <physiologicalReaction direction="left-to-right" evidence="3">
        <dbReference type="Rhea" id="RHEA:28267"/>
    </physiologicalReaction>
</comment>
<comment type="catalytic activity">
    <reaction evidence="3">
        <text>(2E,6E)-farnesyl diphosphate = (-)-alpha-cuprenene + diphosphate</text>
        <dbReference type="Rhea" id="RHEA:32027"/>
        <dbReference type="ChEBI" id="CHEBI:33019"/>
        <dbReference type="ChEBI" id="CHEBI:63701"/>
        <dbReference type="ChEBI" id="CHEBI:175763"/>
        <dbReference type="EC" id="4.2.3.95"/>
    </reaction>
    <physiologicalReaction direction="left-to-right" evidence="3">
        <dbReference type="Rhea" id="RHEA:32028"/>
    </physiologicalReaction>
</comment>
<comment type="catalytic activity">
    <reaction evidence="3">
        <text>(2E,6E)-farnesyl diphosphate = alpha-zingiberene + diphosphate</text>
        <dbReference type="Rhea" id="RHEA:28643"/>
        <dbReference type="ChEBI" id="CHEBI:10115"/>
        <dbReference type="ChEBI" id="CHEBI:33019"/>
        <dbReference type="ChEBI" id="CHEBI:175763"/>
        <dbReference type="EC" id="4.2.3.65"/>
    </reaction>
    <physiologicalReaction direction="left-to-right" evidence="3">
        <dbReference type="Rhea" id="RHEA:28644"/>
    </physiologicalReaction>
</comment>
<comment type="catalytic activity">
    <reaction evidence="3">
        <text>(2E,6E)-farnesyl diphosphate = beta-acoradiene + diphosphate</text>
        <dbReference type="Rhea" id="RHEA:68520"/>
        <dbReference type="ChEBI" id="CHEBI:33019"/>
        <dbReference type="ChEBI" id="CHEBI:172925"/>
        <dbReference type="ChEBI" id="CHEBI:175763"/>
    </reaction>
    <physiologicalReaction direction="left-to-right" evidence="3">
        <dbReference type="Rhea" id="RHEA:68521"/>
    </physiologicalReaction>
</comment>
<comment type="catalytic activity">
    <reaction evidence="3">
        <text>(2E,6E)-farnesyl diphosphate = (E)-beta-farnesene + diphosphate</text>
        <dbReference type="Rhea" id="RHEA:27425"/>
        <dbReference type="ChEBI" id="CHEBI:10418"/>
        <dbReference type="ChEBI" id="CHEBI:33019"/>
        <dbReference type="ChEBI" id="CHEBI:175763"/>
        <dbReference type="EC" id="4.2.3.47"/>
    </reaction>
    <physiologicalReaction direction="left-to-right" evidence="3">
        <dbReference type="Rhea" id="RHEA:27426"/>
    </physiologicalReaction>
</comment>
<comment type="cofactor">
    <cofactor evidence="1">
        <name>Mg(2+)</name>
        <dbReference type="ChEBI" id="CHEBI:18420"/>
    </cofactor>
    <cofactor evidence="1">
        <name>Mn(2+)</name>
        <dbReference type="ChEBI" id="CHEBI:29035"/>
    </cofactor>
    <text evidence="1">Binds 3 Mg(2+) or Mn(2+) ions per subunit.</text>
</comment>
<comment type="biophysicochemical properties">
    <kinetics>
        <KM evidence="3">1.2 uM for farnesyl diphosphate</KM>
        <KM evidence="3">0.21 uM for geranyl diphosphate</KM>
        <text>The formation of monoterpene products from geranyl diphosphate (GPP) is unlikely, as the protein is not expected to be present in plastids, where GPP is thought to be produced.</text>
    </kinetics>
</comment>
<comment type="pathway">
    <text evidence="3">Secondary metabolite biosynthesis; terpenoid biosynthesis.</text>
</comment>
<comment type="subunit">
    <text evidence="1">Monomer.</text>
</comment>
<comment type="subcellular location">
    <subcellularLocation>
        <location evidence="8">Cytoplasm</location>
    </subcellularLocation>
</comment>
<comment type="tissue specificity">
    <text evidence="2 3">Expressed exclusively in flowers. Expressed in intrafloral nectaries and in the funiculus within the ovules.</text>
</comment>
<comment type="domain">
    <text evidence="8">The Asp-Asp-Xaa-Xaa-Asp/Glu (DDXXD/E) motif is important for the catalytic activity, presumably through binding to Mg(2+).</text>
</comment>
<comment type="disruption phenotype">
    <text evidence="3">Does not emit any sesquiterpene volatiles except (E)-beta-caryophyllene, alpha-copaene and alpha-humulene.</text>
</comment>
<comment type="similarity">
    <text evidence="8">Belongs to the terpene synthase family. Tpsa subfamily.</text>
</comment>
<comment type="sequence caution" evidence="8">
    <conflict type="erroneous gene model prediction">
        <sequence resource="EMBL-CDS" id="BAA98116"/>
    </conflict>
</comment>
<evidence type="ECO:0000250" key="1">
    <source>
        <dbReference type="UniProtKB" id="Q40577"/>
    </source>
</evidence>
<evidence type="ECO:0000269" key="2">
    <source>
    </source>
</evidence>
<evidence type="ECO:0000269" key="3">
    <source>
    </source>
</evidence>
<evidence type="ECO:0000269" key="4">
    <source>
    </source>
</evidence>
<evidence type="ECO:0000303" key="5">
    <source>
    </source>
</evidence>
<evidence type="ECO:0000303" key="6">
    <source>
    </source>
</evidence>
<evidence type="ECO:0000303" key="7">
    <source>
    </source>
</evidence>
<evidence type="ECO:0000305" key="8"/>
<evidence type="ECO:0000312" key="9">
    <source>
        <dbReference type="Araport" id="AT5G44630"/>
    </source>
</evidence>
<evidence type="ECO:0000312" key="10">
    <source>
        <dbReference type="EMBL" id="BAA98116.1"/>
    </source>
</evidence>
<organism>
    <name type="scientific">Arabidopsis thaliana</name>
    <name type="common">Mouse-ear cress</name>
    <dbReference type="NCBI Taxonomy" id="3702"/>
    <lineage>
        <taxon>Eukaryota</taxon>
        <taxon>Viridiplantae</taxon>
        <taxon>Streptophyta</taxon>
        <taxon>Embryophyta</taxon>
        <taxon>Tracheophyta</taxon>
        <taxon>Spermatophyta</taxon>
        <taxon>Magnoliopsida</taxon>
        <taxon>eudicotyledons</taxon>
        <taxon>Gunneridae</taxon>
        <taxon>Pentapetalae</taxon>
        <taxon>rosids</taxon>
        <taxon>malvids</taxon>
        <taxon>Brassicales</taxon>
        <taxon>Brassicaceae</taxon>
        <taxon>Camelineae</taxon>
        <taxon>Arabidopsis</taxon>
    </lineage>
</organism>
<gene>
    <name evidence="7" type="primary">BS</name>
    <name evidence="5" type="synonym">TPS11</name>
    <name evidence="9" type="ordered locus">At5g44630</name>
    <name evidence="10" type="ORF">K15C23.7</name>
</gene>
<name>BARS_ARATH</name>
<feature type="chain" id="PRO_0000380673" description="Alpha-barbatene synthase">
    <location>
        <begin position="1"/>
        <end position="557"/>
    </location>
</feature>
<feature type="short sequence motif" description="DDXXD motif" evidence="8">
    <location>
        <begin position="310"/>
        <end position="314"/>
    </location>
</feature>
<feature type="binding site" evidence="1">
    <location>
        <position position="273"/>
    </location>
    <ligand>
        <name>(2E,6E)-farnesyl diphosphate</name>
        <dbReference type="ChEBI" id="CHEBI:175763"/>
    </ligand>
</feature>
<feature type="binding site" evidence="1">
    <location>
        <position position="310"/>
    </location>
    <ligand>
        <name>(2E,6E)-farnesyl diphosphate</name>
        <dbReference type="ChEBI" id="CHEBI:175763"/>
    </ligand>
</feature>
<feature type="binding site" evidence="1">
    <location>
        <position position="310"/>
    </location>
    <ligand>
        <name>Mg(2+)</name>
        <dbReference type="ChEBI" id="CHEBI:18420"/>
        <label>1</label>
    </ligand>
</feature>
<feature type="binding site" evidence="1">
    <location>
        <position position="310"/>
    </location>
    <ligand>
        <name>Mg(2+)</name>
        <dbReference type="ChEBI" id="CHEBI:18420"/>
        <label>2</label>
    </ligand>
</feature>
<feature type="binding site" evidence="1">
    <location>
        <position position="314"/>
    </location>
    <ligand>
        <name>(2E,6E)-farnesyl diphosphate</name>
        <dbReference type="ChEBI" id="CHEBI:175763"/>
    </ligand>
</feature>
<feature type="binding site" evidence="1">
    <location>
        <position position="314"/>
    </location>
    <ligand>
        <name>Mg(2+)</name>
        <dbReference type="ChEBI" id="CHEBI:18420"/>
        <label>1</label>
    </ligand>
</feature>
<feature type="binding site" evidence="1">
    <location>
        <position position="314"/>
    </location>
    <ligand>
        <name>Mg(2+)</name>
        <dbReference type="ChEBI" id="CHEBI:18420"/>
        <label>2</label>
    </ligand>
</feature>
<feature type="binding site" evidence="1">
    <location>
        <position position="451"/>
    </location>
    <ligand>
        <name>(2E,6E)-farnesyl diphosphate</name>
        <dbReference type="ChEBI" id="CHEBI:175763"/>
    </ligand>
</feature>
<feature type="binding site" evidence="1">
    <location>
        <position position="454"/>
    </location>
    <ligand>
        <name>(2E,6E)-farnesyl diphosphate</name>
        <dbReference type="ChEBI" id="CHEBI:175763"/>
    </ligand>
</feature>
<feature type="binding site" evidence="1">
    <location>
        <position position="454"/>
    </location>
    <ligand>
        <name>Mg(2+)</name>
        <dbReference type="ChEBI" id="CHEBI:18420"/>
        <label>3</label>
    </ligand>
</feature>
<feature type="binding site" evidence="1">
    <location>
        <position position="455"/>
    </location>
    <ligand>
        <name>Mg(2+)</name>
        <dbReference type="ChEBI" id="CHEBI:18420"/>
        <label>3</label>
    </ligand>
</feature>
<feature type="binding site" evidence="1">
    <location>
        <position position="462"/>
    </location>
    <ligand>
        <name>Mg(2+)</name>
        <dbReference type="ChEBI" id="CHEBI:18420"/>
        <label>3</label>
    </ligand>
</feature>
<feature type="sequence conflict" description="In Ref. 1; AAX59990." evidence="8" ref="1">
    <original>F</original>
    <variation>Y</variation>
    <location>
        <position position="162"/>
    </location>
</feature>
<protein>
    <recommendedName>
        <fullName evidence="7">Alpha-barbatene synthase</fullName>
        <shortName evidence="7">AtBS</shortName>
        <ecNumber evidence="3">4.2.3.69</ecNumber>
    </recommendedName>
    <alternativeName>
        <fullName evidence="6">(-)-beta-bisabolene synthase</fullName>
        <ecNumber evidence="3">4.2.3.55</ecNumber>
    </alternativeName>
    <alternativeName>
        <fullName evidence="6">(E)-beta-farnesene synthase</fullName>
        <ecNumber evidence="3">4.2.3.47</ecNumber>
    </alternativeName>
    <alternativeName>
        <fullName evidence="6">Alpha-cuprenene synthase</fullName>
        <ecNumber evidence="3">4.2.3.95</ecNumber>
    </alternativeName>
    <alternativeName>
        <fullName evidence="6">Alpha-zingiberene synthase</fullName>
        <ecNumber evidence="3">4.2.3.65</ecNumber>
    </alternativeName>
    <alternativeName>
        <fullName evidence="6">Beta-chamigrene synthase</fullName>
        <ecNumber evidence="3">4.2.3.78</ecNumber>
    </alternativeName>
    <alternativeName>
        <fullName evidence="6">Beta-sesquiphellandrene synthase</fullName>
        <ecNumber evidence="3">4.2.3.123</ecNumber>
    </alternativeName>
    <alternativeName>
        <fullName evidence="5">Terpeneoid synthase 11</fullName>
        <shortName evidence="5">AtTPS11</shortName>
    </alternativeName>
    <alternativeName>
        <fullName evidence="6">Thujopsene synthase</fullName>
        <ecNumber evidence="3">4.2.3.79</ecNumber>
    </alternativeName>
</protein>